<evidence type="ECO:0000255" key="1">
    <source>
        <dbReference type="HAMAP-Rule" id="MF_03181"/>
    </source>
</evidence>
<evidence type="ECO:0000256" key="2">
    <source>
        <dbReference type="SAM" id="MobiDB-lite"/>
    </source>
</evidence>
<evidence type="ECO:0000305" key="3"/>
<keyword id="KW-0067">ATP-binding</keyword>
<keyword id="KW-0175">Coiled coil</keyword>
<keyword id="KW-0963">Cytoplasm</keyword>
<keyword id="KW-0479">Metal-binding</keyword>
<keyword id="KW-0507">mRNA processing</keyword>
<keyword id="KW-0547">Nucleotide-binding</keyword>
<keyword id="KW-1185">Reference proteome</keyword>
<keyword id="KW-0862">Zinc</keyword>
<keyword id="KW-0863">Zinc-finger</keyword>
<proteinExistence type="inferred from homology"/>
<accession>Q75BU9</accession>
<protein>
    <recommendedName>
        <fullName evidence="1">PAN2-PAN3 deadenylation complex subunit PAN3</fullName>
    </recommendedName>
    <alternativeName>
        <fullName evidence="1">PAB1P-dependent poly(A)-specific ribonuclease</fullName>
    </alternativeName>
    <alternativeName>
        <fullName evidence="1">Poly(A)-nuclease deadenylation complex subunit 3</fullName>
        <shortName evidence="1">PAN deadenylation complex subunit 3</shortName>
    </alternativeName>
</protein>
<organism>
    <name type="scientific">Eremothecium gossypii (strain ATCC 10895 / CBS 109.51 / FGSC 9923 / NRRL Y-1056)</name>
    <name type="common">Yeast</name>
    <name type="synonym">Ashbya gossypii</name>
    <dbReference type="NCBI Taxonomy" id="284811"/>
    <lineage>
        <taxon>Eukaryota</taxon>
        <taxon>Fungi</taxon>
        <taxon>Dikarya</taxon>
        <taxon>Ascomycota</taxon>
        <taxon>Saccharomycotina</taxon>
        <taxon>Saccharomycetes</taxon>
        <taxon>Saccharomycetales</taxon>
        <taxon>Saccharomycetaceae</taxon>
        <taxon>Eremothecium</taxon>
    </lineage>
</organism>
<dbReference type="EMBL" id="AE016816">
    <property type="protein sequence ID" value="AAS51398.1"/>
    <property type="molecule type" value="Genomic_DNA"/>
</dbReference>
<dbReference type="RefSeq" id="NP_983574.1">
    <property type="nucleotide sequence ID" value="NM_208927.1"/>
</dbReference>
<dbReference type="SMR" id="Q75BU9"/>
<dbReference type="FunCoup" id="Q75BU9">
    <property type="interactions" value="681"/>
</dbReference>
<dbReference type="STRING" id="284811.Q75BU9"/>
<dbReference type="EnsemblFungi" id="AAS51398">
    <property type="protein sequence ID" value="AAS51398"/>
    <property type="gene ID" value="AGOS_ACR172W"/>
</dbReference>
<dbReference type="GeneID" id="4619706"/>
<dbReference type="KEGG" id="ago:AGOS_ACR172W"/>
<dbReference type="eggNOG" id="KOG3741">
    <property type="taxonomic scope" value="Eukaryota"/>
</dbReference>
<dbReference type="HOGENOM" id="CLU_016423_2_1_1"/>
<dbReference type="InParanoid" id="Q75BU9"/>
<dbReference type="OMA" id="YVFHSVD"/>
<dbReference type="OrthoDB" id="204958at2759"/>
<dbReference type="Proteomes" id="UP000000591">
    <property type="component" value="Chromosome III"/>
</dbReference>
<dbReference type="GO" id="GO:0000932">
    <property type="term" value="C:P-body"/>
    <property type="evidence" value="ECO:0000318"/>
    <property type="project" value="GO_Central"/>
</dbReference>
<dbReference type="GO" id="GO:0031251">
    <property type="term" value="C:PAN complex"/>
    <property type="evidence" value="ECO:0000318"/>
    <property type="project" value="GO_Central"/>
</dbReference>
<dbReference type="GO" id="GO:0005524">
    <property type="term" value="F:ATP binding"/>
    <property type="evidence" value="ECO:0007669"/>
    <property type="project" value="UniProtKB-UniRule"/>
</dbReference>
<dbReference type="GO" id="GO:0008143">
    <property type="term" value="F:poly(A) binding"/>
    <property type="evidence" value="ECO:0000318"/>
    <property type="project" value="GO_Central"/>
</dbReference>
<dbReference type="GO" id="GO:0008270">
    <property type="term" value="F:zinc ion binding"/>
    <property type="evidence" value="ECO:0007669"/>
    <property type="project" value="UniProtKB-KW"/>
</dbReference>
<dbReference type="GO" id="GO:0006397">
    <property type="term" value="P:mRNA processing"/>
    <property type="evidence" value="ECO:0007669"/>
    <property type="project" value="UniProtKB-KW"/>
</dbReference>
<dbReference type="GO" id="GO:0000289">
    <property type="term" value="P:nuclear-transcribed mRNA poly(A) tail shortening"/>
    <property type="evidence" value="ECO:0000318"/>
    <property type="project" value="GO_Central"/>
</dbReference>
<dbReference type="GO" id="GO:0006301">
    <property type="term" value="P:postreplication repair"/>
    <property type="evidence" value="ECO:0007669"/>
    <property type="project" value="EnsemblFungi"/>
</dbReference>
<dbReference type="FunFam" id="1.10.287.3700:FF:000002">
    <property type="entry name" value="PAN2-PAN3 deadenylation complex subunit PAN3"/>
    <property type="match status" value="1"/>
</dbReference>
<dbReference type="FunFam" id="1.20.5.5160:FF:000003">
    <property type="entry name" value="PAN2-PAN3 deadenylation complex subunit PAN3"/>
    <property type="match status" value="1"/>
</dbReference>
<dbReference type="Gene3D" id="1.10.287.3700">
    <property type="match status" value="1"/>
</dbReference>
<dbReference type="Gene3D" id="1.20.5.5160">
    <property type="match status" value="1"/>
</dbReference>
<dbReference type="Gene3D" id="6.10.250.3160">
    <property type="match status" value="1"/>
</dbReference>
<dbReference type="Gene3D" id="1.10.510.10">
    <property type="entry name" value="Transferase(Phosphotransferase) domain 1"/>
    <property type="match status" value="1"/>
</dbReference>
<dbReference type="HAMAP" id="MF_03181">
    <property type="entry name" value="PAN3"/>
    <property type="match status" value="1"/>
</dbReference>
<dbReference type="InterPro" id="IPR011009">
    <property type="entry name" value="Kinase-like_dom_sf"/>
</dbReference>
<dbReference type="InterPro" id="IPR030844">
    <property type="entry name" value="PAN3"/>
</dbReference>
<dbReference type="InterPro" id="IPR041332">
    <property type="entry name" value="Pan3_PK"/>
</dbReference>
<dbReference type="InterPro" id="IPR000571">
    <property type="entry name" value="Znf_CCCH"/>
</dbReference>
<dbReference type="PANTHER" id="PTHR12272">
    <property type="entry name" value="DEADENYLATION COMPLEX SUBUNIT PAN3"/>
    <property type="match status" value="1"/>
</dbReference>
<dbReference type="PANTHER" id="PTHR12272:SF11">
    <property type="entry name" value="PAN2-PAN3 DEADENYLATION COMPLEX SUBUNIT PAN3"/>
    <property type="match status" value="1"/>
</dbReference>
<dbReference type="Pfam" id="PF18101">
    <property type="entry name" value="Pan3_PK"/>
    <property type="match status" value="1"/>
</dbReference>
<dbReference type="SUPFAM" id="SSF56112">
    <property type="entry name" value="Protein kinase-like (PK-like)"/>
    <property type="match status" value="1"/>
</dbReference>
<dbReference type="PROSITE" id="PS50103">
    <property type="entry name" value="ZF_C3H1"/>
    <property type="match status" value="1"/>
</dbReference>
<feature type="chain" id="PRO_0000295356" description="PAN2-PAN3 deadenylation complex subunit PAN3">
    <location>
        <begin position="1"/>
        <end position="612"/>
    </location>
</feature>
<feature type="zinc finger region" description="C3H1-type" evidence="1">
    <location>
        <begin position="10"/>
        <end position="39"/>
    </location>
</feature>
<feature type="region of interest" description="Disordered" evidence="2">
    <location>
        <begin position="44"/>
        <end position="64"/>
    </location>
</feature>
<feature type="region of interest" description="Pseudokinase domain" evidence="1">
    <location>
        <begin position="231"/>
        <end position="481"/>
    </location>
</feature>
<feature type="region of interest" description="Knob domain" evidence="1">
    <location>
        <begin position="521"/>
        <end position="612"/>
    </location>
</feature>
<feature type="coiled-coil region" evidence="1">
    <location>
        <begin position="482"/>
        <end position="520"/>
    </location>
</feature>
<feature type="short sequence motif" description="PABPC-interacting motif-2 (PAM-2)" evidence="3">
    <location>
        <begin position="84"/>
        <end position="104"/>
    </location>
</feature>
<feature type="short sequence motif" description="PABPC-interacting motif-2 (PAM-2)" evidence="3">
    <location>
        <begin position="111"/>
        <end position="131"/>
    </location>
</feature>
<feature type="compositionally biased region" description="Low complexity" evidence="2">
    <location>
        <begin position="44"/>
        <end position="62"/>
    </location>
</feature>
<feature type="binding site" evidence="1">
    <location>
        <position position="286"/>
    </location>
    <ligand>
        <name>ATP</name>
        <dbReference type="ChEBI" id="CHEBI:30616"/>
    </ligand>
</feature>
<feature type="binding site" evidence="1">
    <location>
        <begin position="336"/>
        <end position="343"/>
    </location>
    <ligand>
        <name>ATP</name>
        <dbReference type="ChEBI" id="CHEBI:30616"/>
    </ligand>
</feature>
<feature type="binding site" evidence="1">
    <location>
        <begin position="389"/>
        <end position="390"/>
    </location>
    <ligand>
        <name>ATP</name>
        <dbReference type="ChEBI" id="CHEBI:30616"/>
    </ligand>
</feature>
<sequence length="612" mass="67391">MMMNKSKTDWAKDTPCKNITIYGYCKYENDGCIFNHGKPLSTSSNTGGAAAGSAEDSAASGGVTVGNTGKSTFNAKTATSFTPSVAIPDFNNIPSFTPERIVSSPAGDGATAFTPSFNPYGSDSFNPSANVSGPGSAVFAAASGNAGASATAAPRSQSVHVGTGGYLPLAGTAFPTVYPPSHSILQYHLYAPDPPPHLQVPLKANERTPETLFIPNNLREHLLKRNLSALQVFPSDGNLPDIVGDYFGLVPLEFHNRQTGKGRYLGHQNSLYKVFSNFDGKVYIIRRIHDVKTTDVGQISLPFRKWQKVSCPNVVKVKDAFTTLAFGDSSLCVVHDYYPQSNSLYETHVANYTVVPVTQKYLWSYLVQLSNALNEVHRHGLSMNNISLDKVIVTGDPGRIKVGDSAVHDILAFDEGRDIAKEQQADYSAVGALLMDLAQRMLGTRDQPLDSMDIDPLFKRVLAYLLSDEKKTIAEFTALFSHKMLDIISSSQTYSEYIEQHLSRELENGRLFRLMCKLNFIFGRMESSMDIHWSEAGDKFPIILFYDYVFHQVDENGKSVMDLTHVLRCLNKLDTGVSEKIILVTPDEMNCIIISYKELKDSIDSTFRSMTQ</sequence>
<name>PAN3_EREGS</name>
<comment type="function">
    <text evidence="1">Regulatory subunit of the poly(A)-nuclease (PAN) deadenylation complex, one of two cytoplasmic mRNA deadenylases involved in mRNA turnover. PAN specifically shortens poly(A) tails of RNA and the activity is stimulated by poly(A)-binding protein PAB1. PAN deadenylation is followed by rapid degradation of the shortened mRNA tails by the CCR4-NOT complex. Deadenylated mRNAs are then degraded by two alternative mechanisms, namely exosome-mediated 3'-5' exonucleolytic degradation, or deadenylation-dependent mRNA decaping and subsequent 5'-3' exonucleolytic degradation by XRN1. May also be involved in post-transcriptional maturation of mRNA poly(A) tails. PAN3 acts as a positive regulator for PAN activity, recruiting the catalytic subunit PAN2 to mRNA via its interaction with RNA and with PAB1.</text>
</comment>
<comment type="subunit">
    <text evidence="1">Homodimer. Forms a heterotrimer with a catalytic subunit PAN2 to form the poly(A)-nuclease (PAN) deadenylation complex. Interacts (via PAM-2 motif) with poly(A)-binding protein PAB1 (via PABC domain), conferring substrate specificity of the enzyme complex.</text>
</comment>
<comment type="subcellular location">
    <subcellularLocation>
        <location evidence="1">Cytoplasm</location>
    </subcellularLocation>
</comment>
<comment type="domain">
    <text evidence="1">The N-terminal zinc finger binds to poly(A) RNA.</text>
</comment>
<comment type="domain">
    <text evidence="1">Contains a pseudokinase domain. The protein kinase domain is predicted to be catalytically inactive because some of the residues important for catalytic activity are substituted and it lacks the equivalent of the binding site for a peptide substrate. However, it has retained an ATP-binding site and ATP-binding is required for mRNA degradation, stimulating the activity of the PAN2 nuclease in vitro. The nucleotide-binding site is juxtaposed to the RNase active site of PAN2 in the complex and may actually bind nucleosides of a poly(A) RNA rather than ATP, feeding the poly(A)-tail to the active site of the deadenylase and thus increasing the efficiency with which this distributive enzyme degrades oligo(A) RNAs.</text>
</comment>
<comment type="domain">
    <text evidence="1">The pseudokinase domain, the coiled-coil (CC), and C-terminal knob domain (CK) form a structural unit (PKC) that forms an extensive high-affinity interaction surface for PAN2.</text>
</comment>
<comment type="similarity">
    <text evidence="1">Belongs to the protein kinase superfamily. PAN3 family.</text>
</comment>
<gene>
    <name evidence="1" type="primary">PAN3</name>
    <name type="ordered locus">ACR172W</name>
</gene>
<reference key="1">
    <citation type="journal article" date="2004" name="Science">
        <title>The Ashbya gossypii genome as a tool for mapping the ancient Saccharomyces cerevisiae genome.</title>
        <authorList>
            <person name="Dietrich F.S."/>
            <person name="Voegeli S."/>
            <person name="Brachat S."/>
            <person name="Lerch A."/>
            <person name="Gates K."/>
            <person name="Steiner S."/>
            <person name="Mohr C."/>
            <person name="Poehlmann R."/>
            <person name="Luedi P."/>
            <person name="Choi S."/>
            <person name="Wing R.A."/>
            <person name="Flavier A."/>
            <person name="Gaffney T.D."/>
            <person name="Philippsen P."/>
        </authorList>
    </citation>
    <scope>NUCLEOTIDE SEQUENCE [LARGE SCALE GENOMIC DNA]</scope>
    <source>
        <strain>ATCC 10895 / CBS 109.51 / FGSC 9923 / NRRL Y-1056</strain>
    </source>
</reference>
<reference key="2">
    <citation type="journal article" date="2013" name="G3 (Bethesda)">
        <title>Genomes of Ashbya fungi isolated from insects reveal four mating-type loci, numerous translocations, lack of transposons, and distinct gene duplications.</title>
        <authorList>
            <person name="Dietrich F.S."/>
            <person name="Voegeli S."/>
            <person name="Kuo S."/>
            <person name="Philippsen P."/>
        </authorList>
    </citation>
    <scope>GENOME REANNOTATION</scope>
    <source>
        <strain>ATCC 10895 / CBS 109.51 / FGSC 9923 / NRRL Y-1056</strain>
    </source>
</reference>